<feature type="signal peptide" evidence="2">
    <location>
        <begin position="1"/>
        <end position="20"/>
    </location>
</feature>
<feature type="chain" id="PRO_0000285128" description="Transmembrane protein 158">
    <location>
        <begin position="21"/>
        <end position="300"/>
    </location>
</feature>
<feature type="transmembrane region" description="Helical" evidence="2">
    <location>
        <begin position="231"/>
        <end position="251"/>
    </location>
</feature>
<feature type="transmembrane region" description="Helical" evidence="2">
    <location>
        <begin position="273"/>
        <end position="293"/>
    </location>
</feature>
<feature type="glycosylation site" description="N-linked (GlcNAc...) asparagine" evidence="2">
    <location>
        <position position="75"/>
    </location>
</feature>
<feature type="splice variant" id="VSP_024826" description="In isoform 2." evidence="4">
    <location>
        <begin position="273"/>
        <end position="286"/>
    </location>
</feature>
<feature type="sequence conflict" description="In Ref. 1; AAL30845 and 2; BAC05687." evidence="5" ref="1 2">
    <original>A</original>
    <variation>T</variation>
    <location>
        <position position="67"/>
    </location>
</feature>
<proteinExistence type="evidence at protein level"/>
<keyword id="KW-0025">Alternative splicing</keyword>
<keyword id="KW-0325">Glycoprotein</keyword>
<keyword id="KW-0472">Membrane</keyword>
<keyword id="KW-1267">Proteomics identification</keyword>
<keyword id="KW-1185">Reference proteome</keyword>
<keyword id="KW-0732">Signal</keyword>
<keyword id="KW-0812">Transmembrane</keyword>
<keyword id="KW-1133">Transmembrane helix</keyword>
<sequence length="300" mass="30404">MLPLLAALLAAACPLPPVRGGAADAPGLLGVPSNASVNASSADEPIAPRLLASAAPGPPERPGPEEAAAAAAPCNISVQRQMLSSLLVRWGRPRGFQCDLLLFSTNAHGRAFFAAAFHRVGPPLLIEHLGLAAGGAQQDLRLCVGCGWVRGRRTGRLRPAAAPSAAAATAGAPTALPAYPAAEPPGPLWLQGEPLHFCCLDFSLEELQGEPGWRLNRKPIESTLVACFMTLVIVVWSVAALIWPVPIIAGFLPNGMEQRRTTASTTAATPAAVPAGTTAAAAAAAAAAAAAAVTSGVATK</sequence>
<gene>
    <name type="primary">TMEM158</name>
    <name type="synonym">HBBP</name>
    <name type="synonym">RIS1</name>
</gene>
<accession>Q8WZ71</accession>
<accession>Q6PFW5</accession>
<accession>Q9Y4M1</accession>
<evidence type="ECO:0000250" key="1"/>
<evidence type="ECO:0000255" key="2"/>
<evidence type="ECO:0000269" key="3">
    <source>
    </source>
</evidence>
<evidence type="ECO:0000303" key="4">
    <source>
    </source>
</evidence>
<evidence type="ECO:0000305" key="5"/>
<reference key="1">
    <citation type="journal article" date="2002" name="Exp. Cell Res.">
        <title>Identification of a candidate tumor-suppressor gene specifically activated during Ras-induced senescence.</title>
        <authorList>
            <person name="Barradas M."/>
            <person name="Gonos E.S."/>
            <person name="Zebedee Z."/>
            <person name="Kolettas E."/>
            <person name="Petropoulou C."/>
            <person name="Delgado M.D."/>
            <person name="Leon J."/>
            <person name="Hara E."/>
            <person name="Serrano M."/>
        </authorList>
    </citation>
    <scope>NUCLEOTIDE SEQUENCE [MRNA] (ISOFORM 1)</scope>
    <scope>INDUCTION</scope>
</reference>
<reference key="2">
    <citation type="submission" date="2002-01" db="EMBL/GenBank/DDBJ databases">
        <title>Isolation of human homologue of rat p40BBp (brain specific binding protein).</title>
        <authorList>
            <person name="Hama T."/>
        </authorList>
    </citation>
    <scope>NUCLEOTIDE SEQUENCE [MRNA] (ISOFORM 1)</scope>
    <source>
        <tissue>Hippocampus</tissue>
    </source>
</reference>
<reference key="3">
    <citation type="journal article" date="2006" name="Nature">
        <title>The DNA sequence, annotation and analysis of human chromosome 3.</title>
        <authorList>
            <person name="Muzny D.M."/>
            <person name="Scherer S.E."/>
            <person name="Kaul R."/>
            <person name="Wang J."/>
            <person name="Yu J."/>
            <person name="Sudbrak R."/>
            <person name="Buhay C.J."/>
            <person name="Chen R."/>
            <person name="Cree A."/>
            <person name="Ding Y."/>
            <person name="Dugan-Rocha S."/>
            <person name="Gill R."/>
            <person name="Gunaratne P."/>
            <person name="Harris R.A."/>
            <person name="Hawes A.C."/>
            <person name="Hernandez J."/>
            <person name="Hodgson A.V."/>
            <person name="Hume J."/>
            <person name="Jackson A."/>
            <person name="Khan Z.M."/>
            <person name="Kovar-Smith C."/>
            <person name="Lewis L.R."/>
            <person name="Lozado R.J."/>
            <person name="Metzker M.L."/>
            <person name="Milosavljevic A."/>
            <person name="Miner G.R."/>
            <person name="Morgan M.B."/>
            <person name="Nazareth L.V."/>
            <person name="Scott G."/>
            <person name="Sodergren E."/>
            <person name="Song X.-Z."/>
            <person name="Steffen D."/>
            <person name="Wei S."/>
            <person name="Wheeler D.A."/>
            <person name="Wright M.W."/>
            <person name="Worley K.C."/>
            <person name="Yuan Y."/>
            <person name="Zhang Z."/>
            <person name="Adams C.Q."/>
            <person name="Ansari-Lari M.A."/>
            <person name="Ayele M."/>
            <person name="Brown M.J."/>
            <person name="Chen G."/>
            <person name="Chen Z."/>
            <person name="Clendenning J."/>
            <person name="Clerc-Blankenburg K.P."/>
            <person name="Chen R."/>
            <person name="Chen Z."/>
            <person name="Davis C."/>
            <person name="Delgado O."/>
            <person name="Dinh H.H."/>
            <person name="Dong W."/>
            <person name="Draper H."/>
            <person name="Ernst S."/>
            <person name="Fu G."/>
            <person name="Gonzalez-Garay M.L."/>
            <person name="Garcia D.K."/>
            <person name="Gillett W."/>
            <person name="Gu J."/>
            <person name="Hao B."/>
            <person name="Haugen E."/>
            <person name="Havlak P."/>
            <person name="He X."/>
            <person name="Hennig S."/>
            <person name="Hu S."/>
            <person name="Huang W."/>
            <person name="Jackson L.R."/>
            <person name="Jacob L.S."/>
            <person name="Kelly S.H."/>
            <person name="Kube M."/>
            <person name="Levy R."/>
            <person name="Li Z."/>
            <person name="Liu B."/>
            <person name="Liu J."/>
            <person name="Liu W."/>
            <person name="Lu J."/>
            <person name="Maheshwari M."/>
            <person name="Nguyen B.-V."/>
            <person name="Okwuonu G.O."/>
            <person name="Palmeiri A."/>
            <person name="Pasternak S."/>
            <person name="Perez L.M."/>
            <person name="Phelps K.A."/>
            <person name="Plopper F.J."/>
            <person name="Qiang B."/>
            <person name="Raymond C."/>
            <person name="Rodriguez R."/>
            <person name="Saenphimmachak C."/>
            <person name="Santibanez J."/>
            <person name="Shen H."/>
            <person name="Shen Y."/>
            <person name="Subramanian S."/>
            <person name="Tabor P.E."/>
            <person name="Verduzco D."/>
            <person name="Waldron L."/>
            <person name="Wang J."/>
            <person name="Wang J."/>
            <person name="Wang Q."/>
            <person name="Williams G.A."/>
            <person name="Wong G.K.-S."/>
            <person name="Yao Z."/>
            <person name="Zhang J."/>
            <person name="Zhang X."/>
            <person name="Zhao G."/>
            <person name="Zhou J."/>
            <person name="Zhou Y."/>
            <person name="Nelson D."/>
            <person name="Lehrach H."/>
            <person name="Reinhardt R."/>
            <person name="Naylor S.L."/>
            <person name="Yang H."/>
            <person name="Olson M."/>
            <person name="Weinstock G."/>
            <person name="Gibbs R.A."/>
        </authorList>
    </citation>
    <scope>NUCLEOTIDE SEQUENCE [LARGE SCALE GENOMIC DNA]</scope>
</reference>
<reference key="4">
    <citation type="journal article" date="2004" name="Genome Res.">
        <title>The status, quality, and expansion of the NIH full-length cDNA project: the Mammalian Gene Collection (MGC).</title>
        <authorList>
            <consortium name="The MGC Project Team"/>
        </authorList>
    </citation>
    <scope>NUCLEOTIDE SEQUENCE [LARGE SCALE MRNA] (ISOFORM 2)</scope>
    <source>
        <tissue>Uterus</tissue>
    </source>
</reference>
<reference key="5">
    <citation type="journal article" date="2007" name="BMC Genomics">
        <title>The full-ORF clone resource of the German cDNA consortium.</title>
        <authorList>
            <person name="Bechtel S."/>
            <person name="Rosenfelder H."/>
            <person name="Duda A."/>
            <person name="Schmidt C.P."/>
            <person name="Ernst U."/>
            <person name="Wellenreuther R."/>
            <person name="Mehrle A."/>
            <person name="Schuster C."/>
            <person name="Bahr A."/>
            <person name="Bloecker H."/>
            <person name="Heubner D."/>
            <person name="Hoerlein A."/>
            <person name="Michel G."/>
            <person name="Wedler H."/>
            <person name="Koehrer K."/>
            <person name="Ottenwaelder B."/>
            <person name="Poustka A."/>
            <person name="Wiemann S."/>
            <person name="Schupp I."/>
        </authorList>
    </citation>
    <scope>NUCLEOTIDE SEQUENCE [LARGE SCALE MRNA] OF 151-300 (ISOFORM 1)</scope>
    <source>
        <tissue>Uterus</tissue>
    </source>
</reference>
<comment type="function">
    <text evidence="1">Receptor for brain injury-derived neurotrophic peptide (BINP), a synthetic 13-mer peptide.</text>
</comment>
<comment type="subcellular location">
    <subcellularLocation>
        <location evidence="5">Membrane</location>
        <topology evidence="5">Multi-pass membrane protein</topology>
    </subcellularLocation>
</comment>
<comment type="alternative products">
    <event type="alternative splicing"/>
    <isoform>
        <id>Q8WZ71-1</id>
        <name>1</name>
        <sequence type="displayed"/>
    </isoform>
    <isoform>
        <id>Q8WZ71-2</id>
        <name>2</name>
        <sequence type="described" ref="VSP_024826"/>
    </isoform>
</comment>
<comment type="induction">
    <text evidence="3">Up-regulated during Ras-induced senescence.</text>
</comment>
<comment type="PTM">
    <text evidence="1">N-glycosylated.</text>
</comment>
<comment type="similarity">
    <text evidence="5">Belongs to the TMEM158 family.</text>
</comment>
<protein>
    <recommendedName>
        <fullName>Transmembrane protein 158</fullName>
    </recommendedName>
    <alternativeName>
        <fullName>40 kDa BINP-binding protein</fullName>
        <shortName>p40BBP</shortName>
    </alternativeName>
    <alternativeName>
        <fullName>Ras-induced senescence protein 1</fullName>
    </alternativeName>
</protein>
<name>TM158_HUMAN</name>
<dbReference type="EMBL" id="AF438313">
    <property type="protein sequence ID" value="AAL30845.1"/>
    <property type="molecule type" value="mRNA"/>
</dbReference>
<dbReference type="EMBL" id="AB078417">
    <property type="protein sequence ID" value="BAC05687.1"/>
    <property type="molecule type" value="mRNA"/>
</dbReference>
<dbReference type="EMBL" id="AC010170">
    <property type="status" value="NOT_ANNOTATED_CDS"/>
    <property type="molecule type" value="Genomic_DNA"/>
</dbReference>
<dbReference type="EMBL" id="BC057390">
    <property type="protein sequence ID" value="AAH57390.1"/>
    <property type="molecule type" value="mRNA"/>
</dbReference>
<dbReference type="EMBL" id="AL080235">
    <property type="protein sequence ID" value="CAB45781.1"/>
    <property type="molecule type" value="mRNA"/>
</dbReference>
<dbReference type="CCDS" id="CCDS54573.1">
    <molecule id="Q8WZ71-1"/>
</dbReference>
<dbReference type="PIR" id="T12547">
    <property type="entry name" value="T12547"/>
</dbReference>
<dbReference type="RefSeq" id="NP_056259.2">
    <molecule id="Q8WZ71-1"/>
    <property type="nucleotide sequence ID" value="NM_015444.3"/>
</dbReference>
<dbReference type="SMR" id="Q8WZ71"/>
<dbReference type="BioGRID" id="117413">
    <property type="interactions" value="4"/>
</dbReference>
<dbReference type="FunCoup" id="Q8WZ71">
    <property type="interactions" value="9"/>
</dbReference>
<dbReference type="IntAct" id="Q8WZ71">
    <property type="interactions" value="3"/>
</dbReference>
<dbReference type="MINT" id="Q8WZ71"/>
<dbReference type="STRING" id="9606.ENSP00000422431"/>
<dbReference type="GlyCosmos" id="Q8WZ71">
    <property type="glycosylation" value="1 site, No reported glycans"/>
</dbReference>
<dbReference type="GlyGen" id="Q8WZ71">
    <property type="glycosylation" value="4 sites, 2 N-linked glycans (2 sites)"/>
</dbReference>
<dbReference type="iPTMnet" id="Q8WZ71"/>
<dbReference type="PhosphoSitePlus" id="Q8WZ71"/>
<dbReference type="BioMuta" id="TMEM158"/>
<dbReference type="DMDM" id="408360199"/>
<dbReference type="MassIVE" id="Q8WZ71"/>
<dbReference type="PaxDb" id="9606-ENSP00000422431"/>
<dbReference type="PeptideAtlas" id="Q8WZ71"/>
<dbReference type="ProteomicsDB" id="75226">
    <molecule id="Q8WZ71-1"/>
</dbReference>
<dbReference type="ProteomicsDB" id="75227">
    <molecule id="Q8WZ71-2"/>
</dbReference>
<dbReference type="Antibodypedia" id="45715">
    <property type="antibodies" value="78 antibodies from 17 providers"/>
</dbReference>
<dbReference type="DNASU" id="25907"/>
<dbReference type="Ensembl" id="ENST00000503771.2">
    <molecule id="Q8WZ71-1"/>
    <property type="protein sequence ID" value="ENSP00000422431.1"/>
    <property type="gene ID" value="ENSG00000249992.2"/>
</dbReference>
<dbReference type="GeneID" id="25907"/>
<dbReference type="KEGG" id="hsa:25907"/>
<dbReference type="MANE-Select" id="ENST00000503771.2">
    <property type="protein sequence ID" value="ENSP00000422431.1"/>
    <property type="RefSeq nucleotide sequence ID" value="NM_015444.3"/>
    <property type="RefSeq protein sequence ID" value="NP_056259.2"/>
</dbReference>
<dbReference type="UCSC" id="uc011baf.3">
    <molecule id="Q8WZ71-1"/>
    <property type="organism name" value="human"/>
</dbReference>
<dbReference type="AGR" id="HGNC:30293"/>
<dbReference type="CTD" id="25907"/>
<dbReference type="DisGeNET" id="25907"/>
<dbReference type="GeneCards" id="TMEM158"/>
<dbReference type="HGNC" id="HGNC:30293">
    <property type="gene designation" value="TMEM158"/>
</dbReference>
<dbReference type="HPA" id="ENSG00000249992">
    <property type="expression patterns" value="Tissue enhanced (brain, endometrium)"/>
</dbReference>
<dbReference type="MIM" id="620257">
    <property type="type" value="gene"/>
</dbReference>
<dbReference type="neXtProt" id="NX_Q8WZ71"/>
<dbReference type="OpenTargets" id="ENSG00000249992"/>
<dbReference type="PharmGKB" id="PA128395777"/>
<dbReference type="VEuPathDB" id="HostDB:ENSG00000249992"/>
<dbReference type="eggNOG" id="ENOG502RYJ7">
    <property type="taxonomic scope" value="Eukaryota"/>
</dbReference>
<dbReference type="GeneTree" id="ENSGT00390000009719"/>
<dbReference type="HOGENOM" id="CLU_085099_0_0_1"/>
<dbReference type="InParanoid" id="Q8WZ71"/>
<dbReference type="OMA" id="ACLPPCQ"/>
<dbReference type="OrthoDB" id="9426648at2759"/>
<dbReference type="PAN-GO" id="Q8WZ71">
    <property type="GO annotations" value="1 GO annotation based on evolutionary models"/>
</dbReference>
<dbReference type="PhylomeDB" id="Q8WZ71"/>
<dbReference type="TreeFam" id="TF339241"/>
<dbReference type="PathwayCommons" id="Q8WZ71"/>
<dbReference type="SignaLink" id="Q8WZ71"/>
<dbReference type="BioGRID-ORCS" id="25907">
    <property type="hits" value="12 hits in 1154 CRISPR screens"/>
</dbReference>
<dbReference type="ChiTaRS" id="TMEM158">
    <property type="organism name" value="human"/>
</dbReference>
<dbReference type="GeneWiki" id="TMEM158"/>
<dbReference type="GenomeRNAi" id="25907"/>
<dbReference type="Pharos" id="Q8WZ71">
    <property type="development level" value="Tbio"/>
</dbReference>
<dbReference type="PRO" id="PR:Q8WZ71"/>
<dbReference type="Proteomes" id="UP000005640">
    <property type="component" value="Chromosome 3"/>
</dbReference>
<dbReference type="RNAct" id="Q8WZ71">
    <property type="molecule type" value="protein"/>
</dbReference>
<dbReference type="Bgee" id="ENSG00000249992">
    <property type="expression patterns" value="Expressed in seminal vesicle and 151 other cell types or tissues"/>
</dbReference>
<dbReference type="GO" id="GO:0016020">
    <property type="term" value="C:membrane"/>
    <property type="evidence" value="ECO:0007669"/>
    <property type="project" value="UniProtKB-SubCell"/>
</dbReference>
<dbReference type="GO" id="GO:0042277">
    <property type="term" value="F:peptide binding"/>
    <property type="evidence" value="ECO:0000318"/>
    <property type="project" value="GO_Central"/>
</dbReference>
<dbReference type="InterPro" id="IPR038962">
    <property type="entry name" value="TMEM158"/>
</dbReference>
<dbReference type="PANTHER" id="PTHR38324">
    <property type="entry name" value="TRANSMEMBRANE PROTEIN 158"/>
    <property type="match status" value="1"/>
</dbReference>
<dbReference type="PANTHER" id="PTHR38324:SF1">
    <property type="entry name" value="TRANSMEMBRANE PROTEIN 158"/>
    <property type="match status" value="1"/>
</dbReference>
<organism>
    <name type="scientific">Homo sapiens</name>
    <name type="common">Human</name>
    <dbReference type="NCBI Taxonomy" id="9606"/>
    <lineage>
        <taxon>Eukaryota</taxon>
        <taxon>Metazoa</taxon>
        <taxon>Chordata</taxon>
        <taxon>Craniata</taxon>
        <taxon>Vertebrata</taxon>
        <taxon>Euteleostomi</taxon>
        <taxon>Mammalia</taxon>
        <taxon>Eutheria</taxon>
        <taxon>Euarchontoglires</taxon>
        <taxon>Primates</taxon>
        <taxon>Haplorrhini</taxon>
        <taxon>Catarrhini</taxon>
        <taxon>Hominidae</taxon>
        <taxon>Homo</taxon>
    </lineage>
</organism>